<accession>Q87SC4</accession>
<feature type="chain" id="PRO_0000176162" description="Uracil-DNA glycosylase">
    <location>
        <begin position="1"/>
        <end position="226"/>
    </location>
</feature>
<feature type="active site" description="Proton acceptor" evidence="1">
    <location>
        <position position="64"/>
    </location>
</feature>
<evidence type="ECO:0000255" key="1">
    <source>
        <dbReference type="HAMAP-Rule" id="MF_00148"/>
    </source>
</evidence>
<sequence>MNQSPTWHDVIGEEKKQSYFVDTLNFVEAERAAGKAIYPPAKDVFNAFRFTEFNDVKVVILGQDPYHGPNQAHGLCFSVLPGIKTPPSLVNMYKELAQDIEGFQIPQHGFLQSWAEQGVLLLNTVLTVEQGKAHSHSKTGWETFTDRVIEAINQHQHGVVFLLWGSHAQKKGRFIDRSKHHVLAAPHPSPLSAHRGFLGCKHFSQANQLLASQGKEPINWHLPLTV</sequence>
<proteinExistence type="inferred from homology"/>
<gene>
    <name evidence="1" type="primary">ung</name>
    <name type="ordered locus">VP0500</name>
</gene>
<reference key="1">
    <citation type="journal article" date="2003" name="Lancet">
        <title>Genome sequence of Vibrio parahaemolyticus: a pathogenic mechanism distinct from that of V. cholerae.</title>
        <authorList>
            <person name="Makino K."/>
            <person name="Oshima K."/>
            <person name="Kurokawa K."/>
            <person name="Yokoyama K."/>
            <person name="Uda T."/>
            <person name="Tagomori K."/>
            <person name="Iijima Y."/>
            <person name="Najima M."/>
            <person name="Nakano M."/>
            <person name="Yamashita A."/>
            <person name="Kubota Y."/>
            <person name="Kimura S."/>
            <person name="Yasunaga T."/>
            <person name="Honda T."/>
            <person name="Shinagawa H."/>
            <person name="Hattori M."/>
            <person name="Iida T."/>
        </authorList>
    </citation>
    <scope>NUCLEOTIDE SEQUENCE [LARGE SCALE GENOMIC DNA]</scope>
    <source>
        <strain>RIMD 2210633</strain>
    </source>
</reference>
<dbReference type="EC" id="3.2.2.27" evidence="1"/>
<dbReference type="EMBL" id="BA000031">
    <property type="protein sequence ID" value="BAC58763.1"/>
    <property type="molecule type" value="Genomic_DNA"/>
</dbReference>
<dbReference type="RefSeq" id="NP_796879.1">
    <property type="nucleotide sequence ID" value="NC_004603.1"/>
</dbReference>
<dbReference type="RefSeq" id="WP_005465920.1">
    <property type="nucleotide sequence ID" value="NC_004603.1"/>
</dbReference>
<dbReference type="SMR" id="Q87SC4"/>
<dbReference type="GeneID" id="1187968"/>
<dbReference type="KEGG" id="vpa:VP0500"/>
<dbReference type="PATRIC" id="fig|223926.6.peg.476"/>
<dbReference type="eggNOG" id="COG0692">
    <property type="taxonomic scope" value="Bacteria"/>
</dbReference>
<dbReference type="HOGENOM" id="CLU_032162_3_0_6"/>
<dbReference type="Proteomes" id="UP000002493">
    <property type="component" value="Chromosome 1"/>
</dbReference>
<dbReference type="GO" id="GO:0005737">
    <property type="term" value="C:cytoplasm"/>
    <property type="evidence" value="ECO:0007669"/>
    <property type="project" value="UniProtKB-SubCell"/>
</dbReference>
<dbReference type="GO" id="GO:0004844">
    <property type="term" value="F:uracil DNA N-glycosylase activity"/>
    <property type="evidence" value="ECO:0007669"/>
    <property type="project" value="UniProtKB-UniRule"/>
</dbReference>
<dbReference type="GO" id="GO:0097510">
    <property type="term" value="P:base-excision repair, AP site formation via deaminated base removal"/>
    <property type="evidence" value="ECO:0007669"/>
    <property type="project" value="TreeGrafter"/>
</dbReference>
<dbReference type="CDD" id="cd10027">
    <property type="entry name" value="UDG-F1-like"/>
    <property type="match status" value="1"/>
</dbReference>
<dbReference type="FunFam" id="3.40.470.10:FF:000001">
    <property type="entry name" value="Uracil-DNA glycosylase"/>
    <property type="match status" value="1"/>
</dbReference>
<dbReference type="Gene3D" id="3.40.470.10">
    <property type="entry name" value="Uracil-DNA glycosylase-like domain"/>
    <property type="match status" value="1"/>
</dbReference>
<dbReference type="HAMAP" id="MF_00148">
    <property type="entry name" value="UDG"/>
    <property type="match status" value="1"/>
</dbReference>
<dbReference type="InterPro" id="IPR002043">
    <property type="entry name" value="UDG_fam1"/>
</dbReference>
<dbReference type="InterPro" id="IPR018085">
    <property type="entry name" value="Ura-DNA_Glyclase_AS"/>
</dbReference>
<dbReference type="InterPro" id="IPR005122">
    <property type="entry name" value="Uracil-DNA_glycosylase-like"/>
</dbReference>
<dbReference type="InterPro" id="IPR036895">
    <property type="entry name" value="Uracil-DNA_glycosylase-like_sf"/>
</dbReference>
<dbReference type="NCBIfam" id="NF003588">
    <property type="entry name" value="PRK05254.1-1"/>
    <property type="match status" value="1"/>
</dbReference>
<dbReference type="NCBIfam" id="NF003589">
    <property type="entry name" value="PRK05254.1-2"/>
    <property type="match status" value="1"/>
</dbReference>
<dbReference type="NCBIfam" id="NF003591">
    <property type="entry name" value="PRK05254.1-4"/>
    <property type="match status" value="1"/>
</dbReference>
<dbReference type="NCBIfam" id="NF003592">
    <property type="entry name" value="PRK05254.1-5"/>
    <property type="match status" value="1"/>
</dbReference>
<dbReference type="NCBIfam" id="TIGR00628">
    <property type="entry name" value="ung"/>
    <property type="match status" value="1"/>
</dbReference>
<dbReference type="PANTHER" id="PTHR11264">
    <property type="entry name" value="URACIL-DNA GLYCOSYLASE"/>
    <property type="match status" value="1"/>
</dbReference>
<dbReference type="PANTHER" id="PTHR11264:SF0">
    <property type="entry name" value="URACIL-DNA GLYCOSYLASE"/>
    <property type="match status" value="1"/>
</dbReference>
<dbReference type="Pfam" id="PF03167">
    <property type="entry name" value="UDG"/>
    <property type="match status" value="1"/>
</dbReference>
<dbReference type="SMART" id="SM00986">
    <property type="entry name" value="UDG"/>
    <property type="match status" value="1"/>
</dbReference>
<dbReference type="SMART" id="SM00987">
    <property type="entry name" value="UreE_C"/>
    <property type="match status" value="1"/>
</dbReference>
<dbReference type="SUPFAM" id="SSF52141">
    <property type="entry name" value="Uracil-DNA glycosylase-like"/>
    <property type="match status" value="1"/>
</dbReference>
<dbReference type="PROSITE" id="PS00130">
    <property type="entry name" value="U_DNA_GLYCOSYLASE"/>
    <property type="match status" value="1"/>
</dbReference>
<name>UNG_VIBPA</name>
<protein>
    <recommendedName>
        <fullName evidence="1">Uracil-DNA glycosylase</fullName>
        <shortName evidence="1">UDG</shortName>
        <ecNumber evidence="1">3.2.2.27</ecNumber>
    </recommendedName>
</protein>
<keyword id="KW-0963">Cytoplasm</keyword>
<keyword id="KW-0227">DNA damage</keyword>
<keyword id="KW-0234">DNA repair</keyword>
<keyword id="KW-0378">Hydrolase</keyword>
<organism>
    <name type="scientific">Vibrio parahaemolyticus serotype O3:K6 (strain RIMD 2210633)</name>
    <dbReference type="NCBI Taxonomy" id="223926"/>
    <lineage>
        <taxon>Bacteria</taxon>
        <taxon>Pseudomonadati</taxon>
        <taxon>Pseudomonadota</taxon>
        <taxon>Gammaproteobacteria</taxon>
        <taxon>Vibrionales</taxon>
        <taxon>Vibrionaceae</taxon>
        <taxon>Vibrio</taxon>
    </lineage>
</organism>
<comment type="function">
    <text evidence="1">Excises uracil residues from the DNA which can arise as a result of misincorporation of dUMP residues by DNA polymerase or due to deamination of cytosine.</text>
</comment>
<comment type="catalytic activity">
    <reaction evidence="1">
        <text>Hydrolyzes single-stranded DNA or mismatched double-stranded DNA and polynucleotides, releasing free uracil.</text>
        <dbReference type="EC" id="3.2.2.27"/>
    </reaction>
</comment>
<comment type="subcellular location">
    <subcellularLocation>
        <location evidence="1">Cytoplasm</location>
    </subcellularLocation>
</comment>
<comment type="similarity">
    <text evidence="1">Belongs to the uracil-DNA glycosylase (UDG) superfamily. UNG family.</text>
</comment>